<gene>
    <name evidence="1" type="primary">glpE</name>
    <name type="ordered locus">CBU_0587</name>
</gene>
<feature type="chain" id="PRO_0000200548" description="Thiosulfate sulfurtransferase GlpE">
    <location>
        <begin position="1"/>
        <end position="107"/>
    </location>
</feature>
<feature type="domain" description="Rhodanese" evidence="1">
    <location>
        <begin position="16"/>
        <end position="104"/>
    </location>
</feature>
<feature type="active site" description="Cysteine persulfide intermediate" evidence="1">
    <location>
        <position position="64"/>
    </location>
</feature>
<sequence length="107" mass="12362">MMYKQISHLEAWELVKKRDIVIADVRDQDSYEEEHIANALHLSMAKLQEYSEKADKEKPVLVYCYHGISSQSVAQHLVEQGFKEVYSLIGGFETWKAHHPTSDANKN</sequence>
<organism>
    <name type="scientific">Coxiella burnetii (strain RSA 493 / Nine Mile phase I)</name>
    <dbReference type="NCBI Taxonomy" id="227377"/>
    <lineage>
        <taxon>Bacteria</taxon>
        <taxon>Pseudomonadati</taxon>
        <taxon>Pseudomonadota</taxon>
        <taxon>Gammaproteobacteria</taxon>
        <taxon>Legionellales</taxon>
        <taxon>Coxiellaceae</taxon>
        <taxon>Coxiella</taxon>
    </lineage>
</organism>
<comment type="function">
    <text evidence="1">Transferase that catalyzes the transfer of sulfur from thiosulfate to thiophilic acceptors such as cyanide or dithiols. May function in a CysM-independent thiosulfate assimilation pathway by catalyzing the conversion of thiosulfate to sulfite, which can then be used for L-cysteine biosynthesis.</text>
</comment>
<comment type="catalytic activity">
    <reaction evidence="1">
        <text>thiosulfate + hydrogen cyanide = thiocyanate + sulfite + 2 H(+)</text>
        <dbReference type="Rhea" id="RHEA:16881"/>
        <dbReference type="ChEBI" id="CHEBI:15378"/>
        <dbReference type="ChEBI" id="CHEBI:17359"/>
        <dbReference type="ChEBI" id="CHEBI:18022"/>
        <dbReference type="ChEBI" id="CHEBI:18407"/>
        <dbReference type="ChEBI" id="CHEBI:33542"/>
        <dbReference type="EC" id="2.8.1.1"/>
    </reaction>
</comment>
<comment type="catalytic activity">
    <reaction evidence="1">
        <text>thiosulfate + [thioredoxin]-dithiol = [thioredoxin]-disulfide + hydrogen sulfide + sulfite + 2 H(+)</text>
        <dbReference type="Rhea" id="RHEA:83859"/>
        <dbReference type="Rhea" id="RHEA-COMP:10698"/>
        <dbReference type="Rhea" id="RHEA-COMP:10700"/>
        <dbReference type="ChEBI" id="CHEBI:15378"/>
        <dbReference type="ChEBI" id="CHEBI:17359"/>
        <dbReference type="ChEBI" id="CHEBI:29919"/>
        <dbReference type="ChEBI" id="CHEBI:29950"/>
        <dbReference type="ChEBI" id="CHEBI:33542"/>
        <dbReference type="ChEBI" id="CHEBI:50058"/>
    </reaction>
</comment>
<comment type="subcellular location">
    <subcellularLocation>
        <location evidence="1">Cytoplasm</location>
    </subcellularLocation>
</comment>
<comment type="similarity">
    <text evidence="1">Belongs to the GlpE family.</text>
</comment>
<reference key="1">
    <citation type="journal article" date="2003" name="Proc. Natl. Acad. Sci. U.S.A.">
        <title>Complete genome sequence of the Q-fever pathogen, Coxiella burnetii.</title>
        <authorList>
            <person name="Seshadri R."/>
            <person name="Paulsen I.T."/>
            <person name="Eisen J.A."/>
            <person name="Read T.D."/>
            <person name="Nelson K.E."/>
            <person name="Nelson W.C."/>
            <person name="Ward N.L."/>
            <person name="Tettelin H."/>
            <person name="Davidsen T.M."/>
            <person name="Beanan M.J."/>
            <person name="DeBoy R.T."/>
            <person name="Daugherty S.C."/>
            <person name="Brinkac L.M."/>
            <person name="Madupu R."/>
            <person name="Dodson R.J."/>
            <person name="Khouri H.M."/>
            <person name="Lee K.H."/>
            <person name="Carty H.A."/>
            <person name="Scanlan D."/>
            <person name="Heinzen R.A."/>
            <person name="Thompson H.A."/>
            <person name="Samuel J.E."/>
            <person name="Fraser C.M."/>
            <person name="Heidelberg J.F."/>
        </authorList>
    </citation>
    <scope>NUCLEOTIDE SEQUENCE [LARGE SCALE GENOMIC DNA]</scope>
    <source>
        <strain>RSA 493 / Nine Mile phase I</strain>
    </source>
</reference>
<protein>
    <recommendedName>
        <fullName evidence="1">Thiosulfate sulfurtransferase GlpE</fullName>
        <ecNumber evidence="1">2.8.1.1</ecNumber>
    </recommendedName>
</protein>
<dbReference type="EC" id="2.8.1.1" evidence="1"/>
<dbReference type="EMBL" id="AE016828">
    <property type="protein sequence ID" value="AAO90131.1"/>
    <property type="molecule type" value="Genomic_DNA"/>
</dbReference>
<dbReference type="RefSeq" id="NP_819617.1">
    <property type="nucleotide sequence ID" value="NC_002971.4"/>
</dbReference>
<dbReference type="RefSeq" id="WP_010957677.1">
    <property type="nucleotide sequence ID" value="NZ_CCYB01000049.1"/>
</dbReference>
<dbReference type="SMR" id="Q83DV5"/>
<dbReference type="STRING" id="227377.CBU_0587"/>
<dbReference type="DNASU" id="1208472"/>
<dbReference type="EnsemblBacteria" id="AAO90131">
    <property type="protein sequence ID" value="AAO90131"/>
    <property type="gene ID" value="CBU_0587"/>
</dbReference>
<dbReference type="GeneID" id="1208472"/>
<dbReference type="KEGG" id="cbu:CBU_0587"/>
<dbReference type="PATRIC" id="fig|227377.7.peg.578"/>
<dbReference type="eggNOG" id="COG0607">
    <property type="taxonomic scope" value="Bacteria"/>
</dbReference>
<dbReference type="HOGENOM" id="CLU_089574_14_0_6"/>
<dbReference type="OrthoDB" id="9791096at2"/>
<dbReference type="Proteomes" id="UP000002671">
    <property type="component" value="Chromosome"/>
</dbReference>
<dbReference type="GO" id="GO:0005737">
    <property type="term" value="C:cytoplasm"/>
    <property type="evidence" value="ECO:0007669"/>
    <property type="project" value="UniProtKB-SubCell"/>
</dbReference>
<dbReference type="GO" id="GO:0004792">
    <property type="term" value="F:thiosulfate-cyanide sulfurtransferase activity"/>
    <property type="evidence" value="ECO:0007669"/>
    <property type="project" value="UniProtKB-UniRule"/>
</dbReference>
<dbReference type="GO" id="GO:0006071">
    <property type="term" value="P:glycerol metabolic process"/>
    <property type="evidence" value="ECO:0007669"/>
    <property type="project" value="UniProtKB-UniRule"/>
</dbReference>
<dbReference type="CDD" id="cd01444">
    <property type="entry name" value="GlpE_ST"/>
    <property type="match status" value="1"/>
</dbReference>
<dbReference type="Gene3D" id="3.40.250.10">
    <property type="entry name" value="Rhodanese-like domain"/>
    <property type="match status" value="1"/>
</dbReference>
<dbReference type="HAMAP" id="MF_01009">
    <property type="entry name" value="Thiosulf_sulfurtr"/>
    <property type="match status" value="1"/>
</dbReference>
<dbReference type="InterPro" id="IPR050229">
    <property type="entry name" value="GlpE_sulfurtransferase"/>
</dbReference>
<dbReference type="InterPro" id="IPR001763">
    <property type="entry name" value="Rhodanese-like_dom"/>
</dbReference>
<dbReference type="InterPro" id="IPR036873">
    <property type="entry name" value="Rhodanese-like_dom_sf"/>
</dbReference>
<dbReference type="InterPro" id="IPR023695">
    <property type="entry name" value="Thiosulf_sulfurTrfase"/>
</dbReference>
<dbReference type="NCBIfam" id="NF001195">
    <property type="entry name" value="PRK00162.1"/>
    <property type="match status" value="1"/>
</dbReference>
<dbReference type="PANTHER" id="PTHR43031">
    <property type="entry name" value="FAD-DEPENDENT OXIDOREDUCTASE"/>
    <property type="match status" value="1"/>
</dbReference>
<dbReference type="PANTHER" id="PTHR43031:SF6">
    <property type="entry name" value="THIOSULFATE SULFURTRANSFERASE GLPE"/>
    <property type="match status" value="1"/>
</dbReference>
<dbReference type="Pfam" id="PF00581">
    <property type="entry name" value="Rhodanese"/>
    <property type="match status" value="1"/>
</dbReference>
<dbReference type="SMART" id="SM00450">
    <property type="entry name" value="RHOD"/>
    <property type="match status" value="1"/>
</dbReference>
<dbReference type="SUPFAM" id="SSF52821">
    <property type="entry name" value="Rhodanese/Cell cycle control phosphatase"/>
    <property type="match status" value="1"/>
</dbReference>
<dbReference type="PROSITE" id="PS50206">
    <property type="entry name" value="RHODANESE_3"/>
    <property type="match status" value="1"/>
</dbReference>
<name>GLPE_COXBU</name>
<accession>Q83DV5</accession>
<evidence type="ECO:0000255" key="1">
    <source>
        <dbReference type="HAMAP-Rule" id="MF_01009"/>
    </source>
</evidence>
<keyword id="KW-0963">Cytoplasm</keyword>
<keyword id="KW-1185">Reference proteome</keyword>
<keyword id="KW-0808">Transferase</keyword>
<proteinExistence type="inferred from homology"/>